<accession>Q6LZN6</accession>
<feature type="chain" id="PRO_0000156121" description="Diphthine synthase">
    <location>
        <begin position="1"/>
        <end position="255"/>
    </location>
</feature>
<feature type="binding site" evidence="1">
    <location>
        <position position="9"/>
    </location>
    <ligand>
        <name>S-adenosyl-L-methionine</name>
        <dbReference type="ChEBI" id="CHEBI:59789"/>
    </ligand>
</feature>
<feature type="binding site" evidence="1">
    <location>
        <position position="85"/>
    </location>
    <ligand>
        <name>S-adenosyl-L-methionine</name>
        <dbReference type="ChEBI" id="CHEBI:59789"/>
    </ligand>
</feature>
<feature type="binding site" evidence="1">
    <location>
        <position position="88"/>
    </location>
    <ligand>
        <name>S-adenosyl-L-methionine</name>
        <dbReference type="ChEBI" id="CHEBI:59789"/>
    </ligand>
</feature>
<feature type="binding site" evidence="1">
    <location>
        <begin position="113"/>
        <end position="114"/>
    </location>
    <ligand>
        <name>S-adenosyl-L-methionine</name>
        <dbReference type="ChEBI" id="CHEBI:59789"/>
    </ligand>
</feature>
<feature type="binding site" evidence="1">
    <location>
        <position position="164"/>
    </location>
    <ligand>
        <name>S-adenosyl-L-methionine</name>
        <dbReference type="ChEBI" id="CHEBI:59789"/>
    </ligand>
</feature>
<feature type="binding site" evidence="1">
    <location>
        <position position="207"/>
    </location>
    <ligand>
        <name>S-adenosyl-L-methionine</name>
        <dbReference type="ChEBI" id="CHEBI:59789"/>
    </ligand>
</feature>
<feature type="binding site" evidence="1">
    <location>
        <position position="232"/>
    </location>
    <ligand>
        <name>S-adenosyl-L-methionine</name>
        <dbReference type="ChEBI" id="CHEBI:59789"/>
    </ligand>
</feature>
<evidence type="ECO:0000255" key="1">
    <source>
        <dbReference type="HAMAP-Rule" id="MF_01084"/>
    </source>
</evidence>
<reference key="1">
    <citation type="journal article" date="2004" name="J. Bacteriol.">
        <title>Complete genome sequence of the genetically tractable hydrogenotrophic methanogen Methanococcus maripaludis.</title>
        <authorList>
            <person name="Hendrickson E.L."/>
            <person name="Kaul R."/>
            <person name="Zhou Y."/>
            <person name="Bovee D."/>
            <person name="Chapman P."/>
            <person name="Chung J."/>
            <person name="Conway de Macario E."/>
            <person name="Dodsworth J.A."/>
            <person name="Gillett W."/>
            <person name="Graham D.E."/>
            <person name="Hackett M."/>
            <person name="Haydock A.K."/>
            <person name="Kang A."/>
            <person name="Land M.L."/>
            <person name="Levy R."/>
            <person name="Lie T.J."/>
            <person name="Major T.A."/>
            <person name="Moore B.C."/>
            <person name="Porat I."/>
            <person name="Palmeiri A."/>
            <person name="Rouse G."/>
            <person name="Saenphimmachak C."/>
            <person name="Soell D."/>
            <person name="Van Dien S."/>
            <person name="Wang T."/>
            <person name="Whitman W.B."/>
            <person name="Xia Q."/>
            <person name="Zhang Y."/>
            <person name="Larimer F.W."/>
            <person name="Olson M.V."/>
            <person name="Leigh J.A."/>
        </authorList>
    </citation>
    <scope>NUCLEOTIDE SEQUENCE [LARGE SCALE GENOMIC DNA]</scope>
    <source>
        <strain>DSM 14266 / JCM 13030 / NBRC 101832 / S2 / LL</strain>
    </source>
</reference>
<gene>
    <name evidence="1" type="primary">dphB</name>
    <name type="synonym">dph5</name>
    <name type="ordered locus">MMP0588</name>
</gene>
<comment type="function">
    <text evidence="1">S-adenosyl-L-methionine-dependent methyltransferase that catalyzes the trimethylation of the amino group of the modified target histidine residue in translation elongation factor 2 (EF-2), to form an intermediate called diphthine. The three successive methylation reactions represent the second step of diphthamide biosynthesis.</text>
</comment>
<comment type="catalytic activity">
    <reaction evidence="1">
        <text>2-[(3S)-amino-3-carboxypropyl]-L-histidyl-[translation elongation factor 2] + 3 S-adenosyl-L-methionine = diphthine-[translation elongation factor 2] + 3 S-adenosyl-L-homocysteine + 3 H(+)</text>
        <dbReference type="Rhea" id="RHEA:36415"/>
        <dbReference type="Rhea" id="RHEA-COMP:9749"/>
        <dbReference type="Rhea" id="RHEA-COMP:10172"/>
        <dbReference type="ChEBI" id="CHEBI:15378"/>
        <dbReference type="ChEBI" id="CHEBI:57856"/>
        <dbReference type="ChEBI" id="CHEBI:59789"/>
        <dbReference type="ChEBI" id="CHEBI:73995"/>
        <dbReference type="ChEBI" id="CHEBI:82696"/>
        <dbReference type="EC" id="2.1.1.98"/>
    </reaction>
</comment>
<comment type="pathway">
    <text evidence="1">Protein modification; peptidyl-diphthamide biosynthesis.</text>
</comment>
<comment type="subunit">
    <text evidence="1">Homodimer.</text>
</comment>
<comment type="similarity">
    <text evidence="1">Belongs to the diphthine synthase family.</text>
</comment>
<protein>
    <recommendedName>
        <fullName evidence="1">Diphthine synthase</fullName>
        <ecNumber evidence="1">2.1.1.98</ecNumber>
    </recommendedName>
    <alternativeName>
        <fullName evidence="1">Diphthamide biosynthesis methyltransferase</fullName>
    </alternativeName>
</protein>
<sequence length="255" mass="28771">MLVMAGLGLYDERDVTLKTLDFAKKVDKIYAEFYTAILTGTTMEKIEGTLQKPITVLDREKVEYETNKLIDEAKDKDIMFLTAGDPMVATTHVDIAVEARKKGIEVVIINAPSIYSAIGITGLQLYKFGKTTSIVFPEPNYFPETPYDVIKDNLKLGYHTLCLLDIQADKERFMTANEGLDALLKIEEKRKENVISEETEVAVVARAGSINPGLYYGKIKDLLNYDFKSPLHCVIIPGKLHFMEEDALKYLFENI</sequence>
<organism>
    <name type="scientific">Methanococcus maripaludis (strain DSM 14266 / JCM 13030 / NBRC 101832 / S2 / LL)</name>
    <dbReference type="NCBI Taxonomy" id="267377"/>
    <lineage>
        <taxon>Archaea</taxon>
        <taxon>Methanobacteriati</taxon>
        <taxon>Methanobacteriota</taxon>
        <taxon>Methanomada group</taxon>
        <taxon>Methanococci</taxon>
        <taxon>Methanococcales</taxon>
        <taxon>Methanococcaceae</taxon>
        <taxon>Methanococcus</taxon>
    </lineage>
</organism>
<name>DPHB_METMP</name>
<proteinExistence type="inferred from homology"/>
<dbReference type="EC" id="2.1.1.98" evidence="1"/>
<dbReference type="EMBL" id="BX950229">
    <property type="protein sequence ID" value="CAF30144.1"/>
    <property type="molecule type" value="Genomic_DNA"/>
</dbReference>
<dbReference type="RefSeq" id="WP_011170532.1">
    <property type="nucleotide sequence ID" value="NC_005791.1"/>
</dbReference>
<dbReference type="SMR" id="Q6LZN6"/>
<dbReference type="STRING" id="267377.MMP0588"/>
<dbReference type="EnsemblBacteria" id="CAF30144">
    <property type="protein sequence ID" value="CAF30144"/>
    <property type="gene ID" value="MMP0588"/>
</dbReference>
<dbReference type="GeneID" id="2761072"/>
<dbReference type="KEGG" id="mmp:MMP0588"/>
<dbReference type="PATRIC" id="fig|267377.15.peg.601"/>
<dbReference type="eggNOG" id="arCOG04161">
    <property type="taxonomic scope" value="Archaea"/>
</dbReference>
<dbReference type="HOGENOM" id="CLU_066040_1_0_2"/>
<dbReference type="OrthoDB" id="39139at2157"/>
<dbReference type="UniPathway" id="UPA00559"/>
<dbReference type="Proteomes" id="UP000000590">
    <property type="component" value="Chromosome"/>
</dbReference>
<dbReference type="GO" id="GO:0004164">
    <property type="term" value="F:diphthine synthase activity"/>
    <property type="evidence" value="ECO:0007669"/>
    <property type="project" value="UniProtKB-UniRule"/>
</dbReference>
<dbReference type="GO" id="GO:0032259">
    <property type="term" value="P:methylation"/>
    <property type="evidence" value="ECO:0007669"/>
    <property type="project" value="UniProtKB-KW"/>
</dbReference>
<dbReference type="GO" id="GO:0017183">
    <property type="term" value="P:protein histidyl modification to diphthamide"/>
    <property type="evidence" value="ECO:0007669"/>
    <property type="project" value="UniProtKB-UniRule"/>
</dbReference>
<dbReference type="CDD" id="cd11647">
    <property type="entry name" value="DHP5_DphB"/>
    <property type="match status" value="1"/>
</dbReference>
<dbReference type="Gene3D" id="3.40.1010.10">
    <property type="entry name" value="Cobalt-precorrin-4 Transmethylase, Domain 1"/>
    <property type="match status" value="1"/>
</dbReference>
<dbReference type="Gene3D" id="3.30.950.10">
    <property type="entry name" value="Methyltransferase, Cobalt-precorrin-4 Transmethylase, Domain 2"/>
    <property type="match status" value="1"/>
</dbReference>
<dbReference type="HAMAP" id="MF_01084">
    <property type="entry name" value="Diphthine_synth"/>
    <property type="match status" value="1"/>
</dbReference>
<dbReference type="InterPro" id="IPR000878">
    <property type="entry name" value="4pyrrol_Mease"/>
</dbReference>
<dbReference type="InterPro" id="IPR035996">
    <property type="entry name" value="4pyrrol_Methylase_sf"/>
</dbReference>
<dbReference type="InterPro" id="IPR014777">
    <property type="entry name" value="4pyrrole_Mease_sub1"/>
</dbReference>
<dbReference type="InterPro" id="IPR014776">
    <property type="entry name" value="4pyrrole_Mease_sub2"/>
</dbReference>
<dbReference type="InterPro" id="IPR004551">
    <property type="entry name" value="Dphthn_synthase"/>
</dbReference>
<dbReference type="NCBIfam" id="TIGR00522">
    <property type="entry name" value="dph5"/>
    <property type="match status" value="1"/>
</dbReference>
<dbReference type="PANTHER" id="PTHR10882:SF0">
    <property type="entry name" value="DIPHTHINE METHYL ESTER SYNTHASE"/>
    <property type="match status" value="1"/>
</dbReference>
<dbReference type="PANTHER" id="PTHR10882">
    <property type="entry name" value="DIPHTHINE SYNTHASE"/>
    <property type="match status" value="1"/>
</dbReference>
<dbReference type="Pfam" id="PF00590">
    <property type="entry name" value="TP_methylase"/>
    <property type="match status" value="1"/>
</dbReference>
<dbReference type="PIRSF" id="PIRSF036432">
    <property type="entry name" value="Diphthine_synth"/>
    <property type="match status" value="1"/>
</dbReference>
<dbReference type="SUPFAM" id="SSF53790">
    <property type="entry name" value="Tetrapyrrole methylase"/>
    <property type="match status" value="1"/>
</dbReference>
<keyword id="KW-0489">Methyltransferase</keyword>
<keyword id="KW-1185">Reference proteome</keyword>
<keyword id="KW-0949">S-adenosyl-L-methionine</keyword>
<keyword id="KW-0808">Transferase</keyword>